<proteinExistence type="evidence at protein level"/>
<dbReference type="EMBL" id="HQ128620">
    <property type="protein sequence ID" value="ADM34278.1"/>
    <property type="molecule type" value="mRNA"/>
</dbReference>
<dbReference type="GO" id="GO:0005576">
    <property type="term" value="C:extracellular region"/>
    <property type="evidence" value="ECO:0007669"/>
    <property type="project" value="UniProtKB-SubCell"/>
</dbReference>
<dbReference type="GO" id="GO:0042742">
    <property type="term" value="P:defense response to bacterium"/>
    <property type="evidence" value="ECO:0007669"/>
    <property type="project" value="UniProtKB-KW"/>
</dbReference>
<dbReference type="GO" id="GO:0050832">
    <property type="term" value="P:defense response to fungus"/>
    <property type="evidence" value="ECO:0007669"/>
    <property type="project" value="UniProtKB-KW"/>
</dbReference>
<dbReference type="GO" id="GO:0031640">
    <property type="term" value="P:killing of cells of another organism"/>
    <property type="evidence" value="ECO:0007669"/>
    <property type="project" value="UniProtKB-KW"/>
</dbReference>
<dbReference type="InterPro" id="IPR012520">
    <property type="entry name" value="Antimicrobial_frog_1"/>
</dbReference>
<dbReference type="InterPro" id="IPR004275">
    <property type="entry name" value="Frog_antimicrobial_propeptide"/>
</dbReference>
<dbReference type="Pfam" id="PF08018">
    <property type="entry name" value="Antimicrobial_1"/>
    <property type="match status" value="1"/>
</dbReference>
<dbReference type="Pfam" id="PF03032">
    <property type="entry name" value="FSAP_sig_propep"/>
    <property type="match status" value="1"/>
</dbReference>
<comment type="function">
    <text evidence="3">Antimicrobial peptide. Active against some Gram-negative and a variety of Gram-positive bacterial strains. Active against fungus C.glabrata 090902 but not against C.neoformans 201211. Shows hemolytic activity against human erythrocytes.</text>
</comment>
<comment type="subcellular location">
    <subcellularLocation>
        <location evidence="2 3">Secreted</location>
    </subcellularLocation>
</comment>
<comment type="tissue specificity">
    <text evidence="5">Expressed by the skin glands.</text>
</comment>
<comment type="similarity">
    <text evidence="2">Belongs to the frog skin active peptide (FSAP) family. Brevinin subfamily.</text>
</comment>
<evidence type="ECO:0000250" key="1">
    <source>
        <dbReference type="UniProtKB" id="P32412"/>
    </source>
</evidence>
<evidence type="ECO:0000255" key="2"/>
<evidence type="ECO:0000269" key="3">
    <source>
    </source>
</evidence>
<evidence type="ECO:0000303" key="4">
    <source>
    </source>
</evidence>
<evidence type="ECO:0000305" key="5">
    <source>
    </source>
</evidence>
<evidence type="ECO:0000312" key="6">
    <source>
        <dbReference type="EMBL" id="ADM34278.1"/>
    </source>
</evidence>
<name>J1MT1_AMOMA</name>
<organism evidence="6">
    <name type="scientific">Amolops mantzorum</name>
    <name type="common">Sichuan torrent frog</name>
    <dbReference type="NCBI Taxonomy" id="167930"/>
    <lineage>
        <taxon>Eukaryota</taxon>
        <taxon>Metazoa</taxon>
        <taxon>Chordata</taxon>
        <taxon>Craniata</taxon>
        <taxon>Vertebrata</taxon>
        <taxon>Euteleostomi</taxon>
        <taxon>Amphibia</taxon>
        <taxon>Batrachia</taxon>
        <taxon>Anura</taxon>
        <taxon>Neobatrachia</taxon>
        <taxon>Ranoidea</taxon>
        <taxon>Ranidae</taxon>
        <taxon>Amolops</taxon>
    </lineage>
</organism>
<reference evidence="6" key="1">
    <citation type="journal article" date="2014" name="Zool. Sci.">
        <title>Peptidomic analysis of antimicrobial peptides in skin secretions of Amolops mantzorum.</title>
        <authorList>
            <person name="Hu Y."/>
            <person name="Yu Z."/>
            <person name="Xu S."/>
            <person name="Hu Y."/>
            <person name="Guo C."/>
            <person name="Li F."/>
            <person name="Li J."/>
            <person name="Liu J."/>
            <person name="Wang H."/>
        </authorList>
    </citation>
    <scope>NUCLEOTIDE SEQUENCE [MRNA]</scope>
    <scope>PROTEIN SEQUENCE OF 47-63</scope>
    <scope>FUNCTION</scope>
    <scope>SYNTHESIS OF 40-76</scope>
    <scope>SUBCELLULAR LOCATION</scope>
    <scope>IDENTIFICATION BY MASS SPECTROMETRY</scope>
    <scope>DISULFIDE BOND</scope>
    <source>
        <tissue evidence="4">Skin</tissue>
        <tissue evidence="4">Skin secretion</tissue>
    </source>
</reference>
<keyword id="KW-0878">Amphibian defense peptide</keyword>
<keyword id="KW-0044">Antibiotic</keyword>
<keyword id="KW-0929">Antimicrobial</keyword>
<keyword id="KW-0165">Cleavage on pair of basic residues</keyword>
<keyword id="KW-0204">Cytolysis</keyword>
<keyword id="KW-0903">Direct protein sequencing</keyword>
<keyword id="KW-1015">Disulfide bond</keyword>
<keyword id="KW-0295">Fungicide</keyword>
<keyword id="KW-0354">Hemolysis</keyword>
<keyword id="KW-0964">Secreted</keyword>
<keyword id="KW-0732">Signal</keyword>
<accession>E1B245</accession>
<feature type="signal peptide" evidence="2">
    <location>
        <begin position="1"/>
        <end position="22"/>
    </location>
</feature>
<feature type="propeptide" id="PRO_0000440086" description="Removed in mature form" evidence="5">
    <location>
        <begin position="23"/>
        <end position="44"/>
    </location>
</feature>
<feature type="peptide" id="PRO_0000440087" description="Jingdongin-1-MT1" evidence="3">
    <location>
        <begin position="47"/>
        <end position="63"/>
    </location>
</feature>
<feature type="disulfide bond" evidence="1">
    <location>
        <begin position="57"/>
        <end position="63"/>
    </location>
</feature>
<protein>
    <recommendedName>
        <fullName evidence="4">Jingdongin-1-MT1</fullName>
    </recommendedName>
</protein>
<sequence length="63" mass="7452">MFTLKKSLLLLFFLGTINLSLCEQERDADEEERRDDDEMDVEVEKRFLPLFLPKIICAITKKC</sequence>